<gene>
    <name type="primary">MKK9</name>
    <name type="synonym">MAP2K9</name>
    <name type="ordered locus">At1g73500</name>
    <name type="ORF">T9L24.32</name>
</gene>
<dbReference type="EC" id="2.7.12.2"/>
<dbReference type="EMBL" id="AC012396">
    <property type="protein sequence ID" value="AAG30984.1"/>
    <property type="molecule type" value="Genomic_DNA"/>
</dbReference>
<dbReference type="EMBL" id="CP002684">
    <property type="protein sequence ID" value="AEE35470.1"/>
    <property type="molecule type" value="Genomic_DNA"/>
</dbReference>
<dbReference type="EMBL" id="AK118530">
    <property type="protein sequence ID" value="BAC43133.1"/>
    <property type="molecule type" value="mRNA"/>
</dbReference>
<dbReference type="EMBL" id="BT005300">
    <property type="protein sequence ID" value="AAO63364.1"/>
    <property type="molecule type" value="mRNA"/>
</dbReference>
<dbReference type="EMBL" id="AY084571">
    <property type="protein sequence ID" value="AAM61137.1"/>
    <property type="molecule type" value="mRNA"/>
</dbReference>
<dbReference type="PIR" id="G96761">
    <property type="entry name" value="G96761"/>
</dbReference>
<dbReference type="RefSeq" id="NP_177492.1">
    <property type="nucleotide sequence ID" value="NM_106009.3"/>
</dbReference>
<dbReference type="SMR" id="Q9FX43"/>
<dbReference type="BioGRID" id="28904">
    <property type="interactions" value="6"/>
</dbReference>
<dbReference type="FunCoup" id="Q9FX43">
    <property type="interactions" value="241"/>
</dbReference>
<dbReference type="IntAct" id="Q9FX43">
    <property type="interactions" value="9"/>
</dbReference>
<dbReference type="STRING" id="3702.Q9FX43"/>
<dbReference type="iPTMnet" id="Q9FX43"/>
<dbReference type="PaxDb" id="3702-AT1G73500.1"/>
<dbReference type="EnsemblPlants" id="AT1G73500.1">
    <property type="protein sequence ID" value="AT1G73500.1"/>
    <property type="gene ID" value="AT1G73500"/>
</dbReference>
<dbReference type="GeneID" id="843685"/>
<dbReference type="Gramene" id="AT1G73500.1">
    <property type="protein sequence ID" value="AT1G73500.1"/>
    <property type="gene ID" value="AT1G73500"/>
</dbReference>
<dbReference type="KEGG" id="ath:AT1G73500"/>
<dbReference type="Araport" id="AT1G73500"/>
<dbReference type="TAIR" id="AT1G73500">
    <property type="gene designation" value="MKK9"/>
</dbReference>
<dbReference type="eggNOG" id="KOG0581">
    <property type="taxonomic scope" value="Eukaryota"/>
</dbReference>
<dbReference type="HOGENOM" id="CLU_000288_63_23_1"/>
<dbReference type="InParanoid" id="Q9FX43"/>
<dbReference type="OMA" id="HILLEFC"/>
<dbReference type="OrthoDB" id="8693905at2759"/>
<dbReference type="PhylomeDB" id="Q9FX43"/>
<dbReference type="BRENDA" id="2.7.12.2">
    <property type="organism ID" value="399"/>
</dbReference>
<dbReference type="PRO" id="PR:Q9FX43"/>
<dbReference type="Proteomes" id="UP000006548">
    <property type="component" value="Chromosome 1"/>
</dbReference>
<dbReference type="ExpressionAtlas" id="Q9FX43">
    <property type="expression patterns" value="baseline and differential"/>
</dbReference>
<dbReference type="GO" id="GO:0005737">
    <property type="term" value="C:cytoplasm"/>
    <property type="evidence" value="ECO:0007669"/>
    <property type="project" value="UniProtKB-SubCell"/>
</dbReference>
<dbReference type="GO" id="GO:0005634">
    <property type="term" value="C:nucleus"/>
    <property type="evidence" value="ECO:0007669"/>
    <property type="project" value="UniProtKB-SubCell"/>
</dbReference>
<dbReference type="GO" id="GO:0005524">
    <property type="term" value="F:ATP binding"/>
    <property type="evidence" value="ECO:0007669"/>
    <property type="project" value="UniProtKB-KW"/>
</dbReference>
<dbReference type="GO" id="GO:0004708">
    <property type="term" value="F:MAP kinase kinase activity"/>
    <property type="evidence" value="ECO:0000314"/>
    <property type="project" value="TAIR"/>
</dbReference>
<dbReference type="GO" id="GO:0030295">
    <property type="term" value="F:protein kinase activator activity"/>
    <property type="evidence" value="ECO:0000314"/>
    <property type="project" value="TAIR"/>
</dbReference>
<dbReference type="GO" id="GO:0106310">
    <property type="term" value="F:protein serine kinase activity"/>
    <property type="evidence" value="ECO:0007669"/>
    <property type="project" value="RHEA"/>
</dbReference>
<dbReference type="GO" id="GO:0004674">
    <property type="term" value="F:protein serine/threonine kinase activity"/>
    <property type="evidence" value="ECO:0007005"/>
    <property type="project" value="TAIR"/>
</dbReference>
<dbReference type="GO" id="GO:0004713">
    <property type="term" value="F:protein tyrosine kinase activity"/>
    <property type="evidence" value="ECO:0007669"/>
    <property type="project" value="RHEA"/>
</dbReference>
<dbReference type="GO" id="GO:0010120">
    <property type="term" value="P:camalexin biosynthetic process"/>
    <property type="evidence" value="ECO:0000314"/>
    <property type="project" value="TAIR"/>
</dbReference>
<dbReference type="GO" id="GO:0071456">
    <property type="term" value="P:cellular response to hypoxia"/>
    <property type="evidence" value="ECO:0007007"/>
    <property type="project" value="TAIR"/>
</dbReference>
<dbReference type="GO" id="GO:0009693">
    <property type="term" value="P:ethylene biosynthetic process"/>
    <property type="evidence" value="ECO:0000314"/>
    <property type="project" value="TAIR"/>
</dbReference>
<dbReference type="GO" id="GO:0009873">
    <property type="term" value="P:ethylene-activated signaling pathway"/>
    <property type="evidence" value="ECO:0000315"/>
    <property type="project" value="TAIR"/>
</dbReference>
<dbReference type="GO" id="GO:0010150">
    <property type="term" value="P:leaf senescence"/>
    <property type="evidence" value="ECO:0000315"/>
    <property type="project" value="UniProtKB"/>
</dbReference>
<dbReference type="GO" id="GO:0009875">
    <property type="term" value="P:pollen-pistil interaction"/>
    <property type="evidence" value="ECO:0000316"/>
    <property type="project" value="TAIR"/>
</dbReference>
<dbReference type="GO" id="GO:0045893">
    <property type="term" value="P:positive regulation of DNA-templated transcription"/>
    <property type="evidence" value="ECO:0000270"/>
    <property type="project" value="TAIR"/>
</dbReference>
<dbReference type="GO" id="GO:0046777">
    <property type="term" value="P:protein autophosphorylation"/>
    <property type="evidence" value="ECO:0000314"/>
    <property type="project" value="TAIR"/>
</dbReference>
<dbReference type="GO" id="GO:0009620">
    <property type="term" value="P:response to fungus"/>
    <property type="evidence" value="ECO:0000270"/>
    <property type="project" value="UniProtKB"/>
</dbReference>
<dbReference type="GO" id="GO:0009651">
    <property type="term" value="P:response to salt stress"/>
    <property type="evidence" value="ECO:0000315"/>
    <property type="project" value="TAIR"/>
</dbReference>
<dbReference type="GO" id="GO:0009611">
    <property type="term" value="P:response to wounding"/>
    <property type="evidence" value="ECO:0000270"/>
    <property type="project" value="TAIR"/>
</dbReference>
<dbReference type="CDD" id="cd06623">
    <property type="entry name" value="PKc_MAPKK_plant_like"/>
    <property type="match status" value="1"/>
</dbReference>
<dbReference type="FunFam" id="1.10.510.10:FF:000350">
    <property type="entry name" value="Mitogen-activated protein kinase 2"/>
    <property type="match status" value="1"/>
</dbReference>
<dbReference type="FunFam" id="3.30.200.20:FF:000732">
    <property type="entry name" value="Mitogen-activated protein kinase kinase"/>
    <property type="match status" value="1"/>
</dbReference>
<dbReference type="Gene3D" id="3.30.200.20">
    <property type="entry name" value="Phosphorylase Kinase, domain 1"/>
    <property type="match status" value="1"/>
</dbReference>
<dbReference type="Gene3D" id="1.10.510.10">
    <property type="entry name" value="Transferase(Phosphotransferase) domain 1"/>
    <property type="match status" value="1"/>
</dbReference>
<dbReference type="InterPro" id="IPR011009">
    <property type="entry name" value="Kinase-like_dom_sf"/>
</dbReference>
<dbReference type="InterPro" id="IPR000719">
    <property type="entry name" value="Prot_kinase_dom"/>
</dbReference>
<dbReference type="InterPro" id="IPR017441">
    <property type="entry name" value="Protein_kinase_ATP_BS"/>
</dbReference>
<dbReference type="InterPro" id="IPR008271">
    <property type="entry name" value="Ser/Thr_kinase_AS"/>
</dbReference>
<dbReference type="PANTHER" id="PTHR48013:SF9">
    <property type="entry name" value="DUAL SPECIFICITY MITOGEN-ACTIVATED PROTEIN KINASE KINASE 5"/>
    <property type="match status" value="1"/>
</dbReference>
<dbReference type="PANTHER" id="PTHR48013">
    <property type="entry name" value="DUAL SPECIFICITY MITOGEN-ACTIVATED PROTEIN KINASE KINASE 5-RELATED"/>
    <property type="match status" value="1"/>
</dbReference>
<dbReference type="Pfam" id="PF00069">
    <property type="entry name" value="Pkinase"/>
    <property type="match status" value="1"/>
</dbReference>
<dbReference type="SMART" id="SM00220">
    <property type="entry name" value="S_TKc"/>
    <property type="match status" value="1"/>
</dbReference>
<dbReference type="SUPFAM" id="SSF56112">
    <property type="entry name" value="Protein kinase-like (PK-like)"/>
    <property type="match status" value="1"/>
</dbReference>
<dbReference type="PROSITE" id="PS00107">
    <property type="entry name" value="PROTEIN_KINASE_ATP"/>
    <property type="match status" value="1"/>
</dbReference>
<dbReference type="PROSITE" id="PS50011">
    <property type="entry name" value="PROTEIN_KINASE_DOM"/>
    <property type="match status" value="1"/>
</dbReference>
<dbReference type="PROSITE" id="PS00108">
    <property type="entry name" value="PROTEIN_KINASE_ST"/>
    <property type="match status" value="1"/>
</dbReference>
<reference key="1">
    <citation type="journal article" date="2000" name="Nature">
        <title>Sequence and analysis of chromosome 1 of the plant Arabidopsis thaliana.</title>
        <authorList>
            <person name="Theologis A."/>
            <person name="Ecker J.R."/>
            <person name="Palm C.J."/>
            <person name="Federspiel N.A."/>
            <person name="Kaul S."/>
            <person name="White O."/>
            <person name="Alonso J."/>
            <person name="Altafi H."/>
            <person name="Araujo R."/>
            <person name="Bowman C.L."/>
            <person name="Brooks S.Y."/>
            <person name="Buehler E."/>
            <person name="Chan A."/>
            <person name="Chao Q."/>
            <person name="Chen H."/>
            <person name="Cheuk R.F."/>
            <person name="Chin C.W."/>
            <person name="Chung M.K."/>
            <person name="Conn L."/>
            <person name="Conway A.B."/>
            <person name="Conway A.R."/>
            <person name="Creasy T.H."/>
            <person name="Dewar K."/>
            <person name="Dunn P."/>
            <person name="Etgu P."/>
            <person name="Feldblyum T.V."/>
            <person name="Feng J.-D."/>
            <person name="Fong B."/>
            <person name="Fujii C.Y."/>
            <person name="Gill J.E."/>
            <person name="Goldsmith A.D."/>
            <person name="Haas B."/>
            <person name="Hansen N.F."/>
            <person name="Hughes B."/>
            <person name="Huizar L."/>
            <person name="Hunter J.L."/>
            <person name="Jenkins J."/>
            <person name="Johnson-Hopson C."/>
            <person name="Khan S."/>
            <person name="Khaykin E."/>
            <person name="Kim C.J."/>
            <person name="Koo H.L."/>
            <person name="Kremenetskaia I."/>
            <person name="Kurtz D.B."/>
            <person name="Kwan A."/>
            <person name="Lam B."/>
            <person name="Langin-Hooper S."/>
            <person name="Lee A."/>
            <person name="Lee J.M."/>
            <person name="Lenz C.A."/>
            <person name="Li J.H."/>
            <person name="Li Y.-P."/>
            <person name="Lin X."/>
            <person name="Liu S.X."/>
            <person name="Liu Z.A."/>
            <person name="Luros J.S."/>
            <person name="Maiti R."/>
            <person name="Marziali A."/>
            <person name="Militscher J."/>
            <person name="Miranda M."/>
            <person name="Nguyen M."/>
            <person name="Nierman W.C."/>
            <person name="Osborne B.I."/>
            <person name="Pai G."/>
            <person name="Peterson J."/>
            <person name="Pham P.K."/>
            <person name="Rizzo M."/>
            <person name="Rooney T."/>
            <person name="Rowley D."/>
            <person name="Sakano H."/>
            <person name="Salzberg S.L."/>
            <person name="Schwartz J.R."/>
            <person name="Shinn P."/>
            <person name="Southwick A.M."/>
            <person name="Sun H."/>
            <person name="Tallon L.J."/>
            <person name="Tambunga G."/>
            <person name="Toriumi M.J."/>
            <person name="Town C.D."/>
            <person name="Utterback T."/>
            <person name="Van Aken S."/>
            <person name="Vaysberg M."/>
            <person name="Vysotskaia V.S."/>
            <person name="Walker M."/>
            <person name="Wu D."/>
            <person name="Yu G."/>
            <person name="Fraser C.M."/>
            <person name="Venter J.C."/>
            <person name="Davis R.W."/>
        </authorList>
    </citation>
    <scope>NUCLEOTIDE SEQUENCE [LARGE SCALE GENOMIC DNA]</scope>
    <source>
        <strain>cv. Columbia</strain>
    </source>
</reference>
<reference key="2">
    <citation type="journal article" date="2017" name="Plant J.">
        <title>Araport11: a complete reannotation of the Arabidopsis thaliana reference genome.</title>
        <authorList>
            <person name="Cheng C.Y."/>
            <person name="Krishnakumar V."/>
            <person name="Chan A.P."/>
            <person name="Thibaud-Nissen F."/>
            <person name="Schobel S."/>
            <person name="Town C.D."/>
        </authorList>
    </citation>
    <scope>GENOME REANNOTATION</scope>
    <source>
        <strain>cv. Columbia</strain>
    </source>
</reference>
<reference key="3">
    <citation type="journal article" date="2002" name="Science">
        <title>Functional annotation of a full-length Arabidopsis cDNA collection.</title>
        <authorList>
            <person name="Seki M."/>
            <person name="Narusaka M."/>
            <person name="Kamiya A."/>
            <person name="Ishida J."/>
            <person name="Satou M."/>
            <person name="Sakurai T."/>
            <person name="Nakajima M."/>
            <person name="Enju A."/>
            <person name="Akiyama K."/>
            <person name="Oono Y."/>
            <person name="Muramatsu M."/>
            <person name="Hayashizaki Y."/>
            <person name="Kawai J."/>
            <person name="Carninci P."/>
            <person name="Itoh M."/>
            <person name="Ishii Y."/>
            <person name="Arakawa T."/>
            <person name="Shibata K."/>
            <person name="Shinagawa A."/>
            <person name="Shinozaki K."/>
        </authorList>
    </citation>
    <scope>NUCLEOTIDE SEQUENCE [LARGE SCALE MRNA]</scope>
    <source>
        <strain>cv. Columbia</strain>
    </source>
</reference>
<reference key="4">
    <citation type="journal article" date="2003" name="Science">
        <title>Empirical analysis of transcriptional activity in the Arabidopsis genome.</title>
        <authorList>
            <person name="Yamada K."/>
            <person name="Lim J."/>
            <person name="Dale J.M."/>
            <person name="Chen H."/>
            <person name="Shinn P."/>
            <person name="Palm C.J."/>
            <person name="Southwick A.M."/>
            <person name="Wu H.C."/>
            <person name="Kim C.J."/>
            <person name="Nguyen M."/>
            <person name="Pham P.K."/>
            <person name="Cheuk R.F."/>
            <person name="Karlin-Newmann G."/>
            <person name="Liu S.X."/>
            <person name="Lam B."/>
            <person name="Sakano H."/>
            <person name="Wu T."/>
            <person name="Yu G."/>
            <person name="Miranda M."/>
            <person name="Quach H.L."/>
            <person name="Tripp M."/>
            <person name="Chang C.H."/>
            <person name="Lee J.M."/>
            <person name="Toriumi M.J."/>
            <person name="Chan M.M."/>
            <person name="Tang C.C."/>
            <person name="Onodera C.S."/>
            <person name="Deng J.M."/>
            <person name="Akiyama K."/>
            <person name="Ansari Y."/>
            <person name="Arakawa T."/>
            <person name="Banh J."/>
            <person name="Banno F."/>
            <person name="Bowser L."/>
            <person name="Brooks S.Y."/>
            <person name="Carninci P."/>
            <person name="Chao Q."/>
            <person name="Choy N."/>
            <person name="Enju A."/>
            <person name="Goldsmith A.D."/>
            <person name="Gurjal M."/>
            <person name="Hansen N.F."/>
            <person name="Hayashizaki Y."/>
            <person name="Johnson-Hopson C."/>
            <person name="Hsuan V.W."/>
            <person name="Iida K."/>
            <person name="Karnes M."/>
            <person name="Khan S."/>
            <person name="Koesema E."/>
            <person name="Ishida J."/>
            <person name="Jiang P.X."/>
            <person name="Jones T."/>
            <person name="Kawai J."/>
            <person name="Kamiya A."/>
            <person name="Meyers C."/>
            <person name="Nakajima M."/>
            <person name="Narusaka M."/>
            <person name="Seki M."/>
            <person name="Sakurai T."/>
            <person name="Satou M."/>
            <person name="Tamse R."/>
            <person name="Vaysberg M."/>
            <person name="Wallender E.K."/>
            <person name="Wong C."/>
            <person name="Yamamura Y."/>
            <person name="Yuan S."/>
            <person name="Shinozaki K."/>
            <person name="Davis R.W."/>
            <person name="Theologis A."/>
            <person name="Ecker J.R."/>
        </authorList>
    </citation>
    <scope>NUCLEOTIDE SEQUENCE [LARGE SCALE MRNA]</scope>
    <source>
        <strain>cv. Columbia</strain>
    </source>
</reference>
<reference key="5">
    <citation type="submission" date="2002-03" db="EMBL/GenBank/DDBJ databases">
        <title>Full-length cDNA from Arabidopsis thaliana.</title>
        <authorList>
            <person name="Brover V.V."/>
            <person name="Troukhan M.E."/>
            <person name="Alexandrov N.A."/>
            <person name="Lu Y.-P."/>
            <person name="Flavell R.B."/>
            <person name="Feldmann K.A."/>
        </authorList>
    </citation>
    <scope>NUCLEOTIDE SEQUENCE [LARGE SCALE MRNA]</scope>
</reference>
<reference key="6">
    <citation type="journal article" date="2002" name="Trends Plant Sci.">
        <title>Mitogen-activated protein kinase cascades in plants: a new nomenclature.</title>
        <authorList>
            <consortium name="MAPK group"/>
        </authorList>
    </citation>
    <scope>GENE FAMILY</scope>
    <scope>NOMENCLATURE</scope>
</reference>
<reference key="7">
    <citation type="journal article" date="2006" name="Trends Plant Sci.">
        <title>Ancient signals: comparative genomics of plant MAPK and MAPKK gene families.</title>
        <authorList>
            <person name="Hamel L.P."/>
            <person name="Nicole M.C."/>
            <person name="Sritubtim S."/>
            <person name="Morency M.J."/>
            <person name="Ellis M."/>
            <person name="Ehlting J."/>
            <person name="Beaudoin N."/>
            <person name="Barbazuk B."/>
            <person name="Klessig D."/>
            <person name="Lee J."/>
            <person name="Martin G."/>
            <person name="Mundy J."/>
            <person name="Ohashi Y."/>
            <person name="Scheel D."/>
            <person name="Sheen J."/>
            <person name="Xing T."/>
            <person name="Zhang S."/>
            <person name="Seguin A."/>
            <person name="Ellis B.E."/>
        </authorList>
    </citation>
    <scope>GENE FAMILY</scope>
</reference>
<reference key="8">
    <citation type="journal article" date="2008" name="J. Biol. Chem.">
        <title>Activation of MAPK kinase 9 induces ethylene and camalexin biosynthesis and enhances sensitivity to salt stress in Arabidopsis.</title>
        <authorList>
            <person name="Xu J."/>
            <person name="Li Y."/>
            <person name="Wang Y."/>
            <person name="Liu H."/>
            <person name="Lei L."/>
            <person name="Yang H."/>
            <person name="Liu G."/>
            <person name="Ren D."/>
        </authorList>
    </citation>
    <scope>FUNCTION</scope>
    <scope>DISRUPTION PHENOTYPE</scope>
    <scope>MUTAGENESIS OF LYS-76; SER-201 AND THR-205</scope>
    <scope>PHOSPHORYLATION AT SER-201 AND THR-205</scope>
</reference>
<reference key="9">
    <citation type="journal article" date="2008" name="Nature">
        <title>Dual control of nuclear EIN3 by bifurcate MAPK cascades in C2H4 signalling.</title>
        <authorList>
            <person name="Yoo S.D."/>
            <person name="Cho Y.H."/>
            <person name="Tena G."/>
            <person name="Xiong Y."/>
            <person name="Sheen J."/>
        </authorList>
    </citation>
    <scope>FUNCTION</scope>
    <scope>DISRUPTION PHENOTYPE</scope>
    <scope>SUBCELLULAR LOCATION</scope>
</reference>
<reference key="10">
    <citation type="journal article" date="2008" name="Plant Signal. Behav.">
        <title>MAPK signaling in plant hormone ethylene signal transduction.</title>
        <authorList>
            <person name="Yoo S.D."/>
            <person name="Sheen J."/>
        </authorList>
    </citation>
    <scope>REVIEW</scope>
</reference>
<reference key="11">
    <citation type="journal article" date="2009" name="Plant Physiol.">
        <title>An arabidopsis mitogen-activated protein kinase cascade, MKK9-MPK6, plays a role in leaf senescence.</title>
        <authorList>
            <person name="Zhou C."/>
            <person name="Cai Z."/>
            <person name="Guo Y."/>
            <person name="Gan S."/>
        </authorList>
    </citation>
    <scope>FUNCTION</scope>
    <scope>INDUCTION</scope>
    <scope>MUTAGENESIS OF LYS-76; SER-195 AND SER-201</scope>
    <scope>DISRUPTION PHENOTYPE</scope>
    <scope>PHOSPHORYLATION AT SER-195 AND SER-201</scope>
</reference>
<reference key="12">
    <citation type="journal article" date="2012" name="Mol. Biol. Rep.">
        <title>Expression analysis of MAP2K9 and MAPK6 during pathogenesis of Alternaria blight in Arabidopsis thaliana ecotype Columbia.</title>
        <authorList>
            <person name="Kannan P."/>
            <person name="Pandey D."/>
            <person name="Gupta A.K."/>
            <person name="Punetha H."/>
            <person name="Taj G."/>
            <person name="Kumar A."/>
        </authorList>
    </citation>
    <scope>INDUCTION BY PATHOGEN</scope>
</reference>
<keyword id="KW-0067">ATP-binding</keyword>
<keyword id="KW-0963">Cytoplasm</keyword>
<keyword id="KW-0266">Ethylene biosynthesis</keyword>
<keyword id="KW-0418">Kinase</keyword>
<keyword id="KW-0547">Nucleotide-binding</keyword>
<keyword id="KW-0539">Nucleus</keyword>
<keyword id="KW-0597">Phosphoprotein</keyword>
<keyword id="KW-1185">Reference proteome</keyword>
<keyword id="KW-0723">Serine/threonine-protein kinase</keyword>
<keyword id="KW-0346">Stress response</keyword>
<keyword id="KW-0808">Transferase</keyword>
<protein>
    <recommendedName>
        <fullName>Mitogen-activated protein kinase kinase 9</fullName>
        <shortName>AtMKK9</shortName>
        <shortName>MAP kinase kinase 9</shortName>
        <ecNumber>2.7.12.2</ecNumber>
    </recommendedName>
</protein>
<feature type="chain" id="PRO_0000428625" description="Mitogen-activated protein kinase kinase 9">
    <location>
        <begin position="1"/>
        <end position="310"/>
    </location>
</feature>
<feature type="domain" description="Protein kinase" evidence="1">
    <location>
        <begin position="47"/>
        <end position="306"/>
    </location>
</feature>
<feature type="active site" description="Proton acceptor" evidence="1 2">
    <location>
        <position position="167"/>
    </location>
</feature>
<feature type="binding site" evidence="1">
    <location>
        <begin position="53"/>
        <end position="61"/>
    </location>
    <ligand>
        <name>ATP</name>
        <dbReference type="ChEBI" id="CHEBI:30616"/>
    </ligand>
</feature>
<feature type="binding site" evidence="1">
    <location>
        <position position="76"/>
    </location>
    <ligand>
        <name>ATP</name>
        <dbReference type="ChEBI" id="CHEBI:30616"/>
    </ligand>
</feature>
<feature type="modified residue" description="Phosphoserine" evidence="9">
    <location>
        <position position="195"/>
    </location>
</feature>
<feature type="modified residue" description="Phosphoserine" evidence="8 9">
    <location>
        <position position="201"/>
    </location>
</feature>
<feature type="modified residue" description="Phosphothreonine" evidence="8">
    <location>
        <position position="205"/>
    </location>
</feature>
<feature type="mutagenesis site" description="Abolishes kinase activity." evidence="4 5">
    <original>K</original>
    <variation>R</variation>
    <location>
        <position position="76"/>
    </location>
</feature>
<feature type="mutagenesis site" description="Constitutively active; when associated with E-201." evidence="5">
    <original>S</original>
    <variation>E</variation>
    <location>
        <position position="195"/>
    </location>
</feature>
<feature type="mutagenesis site" description="Constitutively active; when associated with D-205." evidence="4 5">
    <original>S</original>
    <variation>D</variation>
    <location>
        <position position="201"/>
    </location>
</feature>
<feature type="mutagenesis site" description="Constitutively active; when associated with E-195." evidence="4 5">
    <original>S</original>
    <variation>E</variation>
    <location>
        <position position="201"/>
    </location>
</feature>
<feature type="mutagenesis site" description="Constitutively active; when associated with D-201." evidence="4">
    <original>T</original>
    <variation>D</variation>
    <location>
        <position position="205"/>
    </location>
</feature>
<proteinExistence type="evidence at protein level"/>
<name>M2K9_ARATH</name>
<evidence type="ECO:0000255" key="1">
    <source>
        <dbReference type="PROSITE-ProRule" id="PRU00159"/>
    </source>
</evidence>
<evidence type="ECO:0000255" key="2">
    <source>
        <dbReference type="PROSITE-ProRule" id="PRU10027"/>
    </source>
</evidence>
<evidence type="ECO:0000269" key="3">
    <source>
    </source>
</evidence>
<evidence type="ECO:0000269" key="4">
    <source>
    </source>
</evidence>
<evidence type="ECO:0000269" key="5">
    <source>
    </source>
</evidence>
<evidence type="ECO:0000269" key="6">
    <source>
    </source>
</evidence>
<evidence type="ECO:0000305" key="7"/>
<evidence type="ECO:0000305" key="8">
    <source>
    </source>
</evidence>
<evidence type="ECO:0000305" key="9">
    <source>
    </source>
</evidence>
<comment type="function">
    <text evidence="3 4 5">MKK9-MPK3/MPK6 module phosphorylates and activates EIN3, leading to the promotion of EIN3-mediated transcription in ethylene signaling. Autophosphorylates and also phosphorylates MPK3 and MPK6. Plays an important role in ethylene and camalexin biosynthesis and in salt stress response. MKK9-MPK6 module positively regulates leaf senescence.</text>
</comment>
<comment type="catalytic activity">
    <reaction>
        <text>L-seryl-[protein] + ATP = O-phospho-L-seryl-[protein] + ADP + H(+)</text>
        <dbReference type="Rhea" id="RHEA:17989"/>
        <dbReference type="Rhea" id="RHEA-COMP:9863"/>
        <dbReference type="Rhea" id="RHEA-COMP:11604"/>
        <dbReference type="ChEBI" id="CHEBI:15378"/>
        <dbReference type="ChEBI" id="CHEBI:29999"/>
        <dbReference type="ChEBI" id="CHEBI:30616"/>
        <dbReference type="ChEBI" id="CHEBI:83421"/>
        <dbReference type="ChEBI" id="CHEBI:456216"/>
        <dbReference type="EC" id="2.7.12.2"/>
    </reaction>
</comment>
<comment type="catalytic activity">
    <reaction>
        <text>L-threonyl-[protein] + ATP = O-phospho-L-threonyl-[protein] + ADP + H(+)</text>
        <dbReference type="Rhea" id="RHEA:46608"/>
        <dbReference type="Rhea" id="RHEA-COMP:11060"/>
        <dbReference type="Rhea" id="RHEA-COMP:11605"/>
        <dbReference type="ChEBI" id="CHEBI:15378"/>
        <dbReference type="ChEBI" id="CHEBI:30013"/>
        <dbReference type="ChEBI" id="CHEBI:30616"/>
        <dbReference type="ChEBI" id="CHEBI:61977"/>
        <dbReference type="ChEBI" id="CHEBI:456216"/>
        <dbReference type="EC" id="2.7.12.2"/>
    </reaction>
</comment>
<comment type="catalytic activity">
    <reaction>
        <text>L-tyrosyl-[protein] + ATP = O-phospho-L-tyrosyl-[protein] + ADP + H(+)</text>
        <dbReference type="Rhea" id="RHEA:10596"/>
        <dbReference type="Rhea" id="RHEA-COMP:10136"/>
        <dbReference type="Rhea" id="RHEA-COMP:20101"/>
        <dbReference type="ChEBI" id="CHEBI:15378"/>
        <dbReference type="ChEBI" id="CHEBI:30616"/>
        <dbReference type="ChEBI" id="CHEBI:46858"/>
        <dbReference type="ChEBI" id="CHEBI:61978"/>
        <dbReference type="ChEBI" id="CHEBI:456216"/>
        <dbReference type="EC" id="2.7.12.2"/>
    </reaction>
</comment>
<comment type="interaction">
    <interactant intactId="EBI-2128545">
        <id>Q9FX43</id>
    </interactant>
    <interactant intactId="EBI-2358527">
        <id>Q9M1Z5</id>
        <label>MPK10</label>
    </interactant>
    <organismsDiffer>false</organismsDiffer>
    <experiments>2</experiments>
</comment>
<comment type="interaction">
    <interactant intactId="EBI-2128545">
        <id>Q9FX43</id>
    </interactant>
    <interactant intactId="EBI-2128461">
        <id>Q8GYQ5</id>
        <label>MPK12</label>
    </interactant>
    <organismsDiffer>false</organismsDiffer>
    <experiments>2</experiments>
</comment>
<comment type="interaction">
    <interactant intactId="EBI-2128545">
        <id>Q9FX43</id>
    </interactant>
    <interactant intactId="EBI-2358896">
        <id>Q9SJG9</id>
        <label>MPK20</label>
    </interactant>
    <organismsDiffer>false</organismsDiffer>
    <experiments>2</experiments>
</comment>
<comment type="subcellular location">
    <subcellularLocation>
        <location evidence="3">Cytoplasm</location>
    </subcellularLocation>
    <subcellularLocation>
        <location evidence="3">Nucleus</location>
    </subcellularLocation>
    <text>Translocated into the nucleus by ACC treatment.</text>
</comment>
<comment type="induction">
    <text evidence="5 6">Up-regulated during leaf senescence. By Alternaria brassicae pathogen infection.</text>
</comment>
<comment type="PTM">
    <text evidence="8 9">Phosphorylation at Ser-195 and Ser-201 by MAP kinase kinase kinases positively regulates kinase activity. Autophosphorylated (Probable).</text>
</comment>
<comment type="disruption phenotype">
    <text evidence="3 4 5">Broad spectrum of moderate ethylene-insensitive phenotypes. Reduced salt sensitivity. Delayed senescence phenotype.</text>
</comment>
<comment type="similarity">
    <text evidence="7">Belongs to the protein kinase superfamily. STE Ser/Thr protein kinase family. MAP kinase kinase subfamily.</text>
</comment>
<organism>
    <name type="scientific">Arabidopsis thaliana</name>
    <name type="common">Mouse-ear cress</name>
    <dbReference type="NCBI Taxonomy" id="3702"/>
    <lineage>
        <taxon>Eukaryota</taxon>
        <taxon>Viridiplantae</taxon>
        <taxon>Streptophyta</taxon>
        <taxon>Embryophyta</taxon>
        <taxon>Tracheophyta</taxon>
        <taxon>Spermatophyta</taxon>
        <taxon>Magnoliopsida</taxon>
        <taxon>eudicotyledons</taxon>
        <taxon>Gunneridae</taxon>
        <taxon>Pentapetalae</taxon>
        <taxon>rosids</taxon>
        <taxon>malvids</taxon>
        <taxon>Brassicales</taxon>
        <taxon>Brassicaceae</taxon>
        <taxon>Camelineae</taxon>
        <taxon>Arabidopsis</taxon>
    </lineage>
</organism>
<accession>Q9FX43</accession>
<sequence>MALVRERRQLNLRLPLPPISDRRFSTSSSSATTTTVAGCNGISACDLEKLNVLGCGNGGIVYKVRHKTTSEIYALKTVNGDMDPIFTRQLMREMEILRRTDSPYVVKCHGIFEKPVVGEVSILMEYMDGGTLESLRGGVTEQKLAGFAKQILKGLSYLHALKIVHRDIKPANLLLNSKNEVKIADFGVSKILVRSLDSCNSYVGTCAYMSPERFDSESSGGSSDIYAGDIWSFGLMMLELLVGHFPLLPPGQRPDWATLMCAVCFGEPPRAPEGCSEEFRSFVECCLRKDSSKRWTAPQLLAHPFLREDL</sequence>